<protein>
    <recommendedName>
        <fullName evidence="1">GTP cyclohydrolase-2</fullName>
        <ecNumber evidence="1">3.5.4.25</ecNumber>
    </recommendedName>
    <alternativeName>
        <fullName evidence="1">GTP cyclohydrolase II</fullName>
    </alternativeName>
</protein>
<reference key="1">
    <citation type="journal article" date="2008" name="PLoS ONE">
        <title>Comparative analysis of Acinetobacters: three genomes for three lifestyles.</title>
        <authorList>
            <person name="Vallenet D."/>
            <person name="Nordmann P."/>
            <person name="Barbe V."/>
            <person name="Poirel L."/>
            <person name="Mangenot S."/>
            <person name="Bataille E."/>
            <person name="Dossat C."/>
            <person name="Gas S."/>
            <person name="Kreimeyer A."/>
            <person name="Lenoble P."/>
            <person name="Oztas S."/>
            <person name="Poulain J."/>
            <person name="Segurens B."/>
            <person name="Robert C."/>
            <person name="Abergel C."/>
            <person name="Claverie J.-M."/>
            <person name="Raoult D."/>
            <person name="Medigue C."/>
            <person name="Weissenbach J."/>
            <person name="Cruveiller S."/>
        </authorList>
    </citation>
    <scope>NUCLEOTIDE SEQUENCE [LARGE SCALE GENOMIC DNA]</scope>
    <source>
        <strain>SDF</strain>
    </source>
</reference>
<proteinExistence type="inferred from homology"/>
<keyword id="KW-0342">GTP-binding</keyword>
<keyword id="KW-0378">Hydrolase</keyword>
<keyword id="KW-0479">Metal-binding</keyword>
<keyword id="KW-0547">Nucleotide-binding</keyword>
<keyword id="KW-0686">Riboflavin biosynthesis</keyword>
<keyword id="KW-0862">Zinc</keyword>
<sequence length="200" mass="22328">MPIEFIATSKLPTAFGEFNISVFQDPVTGEEHVALSKGLENPPTDPVLVRVHSECLTGDAFASLKCDCGPQLQATQKLINEAGQGVILYLRQEGRGIGLTNKIRAYALQDQGHDTVDANLLLNLPADARRYDMCSIMLDHLKVKEVKLITNNPLKIQALKDQGINVVDRVPLTVGRNPFNEQYLKTKRERMAHLYQKDDF</sequence>
<comment type="function">
    <text evidence="1">Catalyzes the conversion of GTP to 2,5-diamino-6-ribosylamino-4(3H)-pyrimidinone 5'-phosphate (DARP), formate and pyrophosphate.</text>
</comment>
<comment type="catalytic activity">
    <reaction evidence="1">
        <text>GTP + 4 H2O = 2,5-diamino-6-hydroxy-4-(5-phosphoribosylamino)-pyrimidine + formate + 2 phosphate + 3 H(+)</text>
        <dbReference type="Rhea" id="RHEA:23704"/>
        <dbReference type="ChEBI" id="CHEBI:15377"/>
        <dbReference type="ChEBI" id="CHEBI:15378"/>
        <dbReference type="ChEBI" id="CHEBI:15740"/>
        <dbReference type="ChEBI" id="CHEBI:37565"/>
        <dbReference type="ChEBI" id="CHEBI:43474"/>
        <dbReference type="ChEBI" id="CHEBI:58614"/>
        <dbReference type="EC" id="3.5.4.25"/>
    </reaction>
</comment>
<comment type="cofactor">
    <cofactor evidence="1">
        <name>Zn(2+)</name>
        <dbReference type="ChEBI" id="CHEBI:29105"/>
    </cofactor>
    <text evidence="1">Binds 1 zinc ion per subunit.</text>
</comment>
<comment type="pathway">
    <text evidence="1">Cofactor biosynthesis; riboflavin biosynthesis; 5-amino-6-(D-ribitylamino)uracil from GTP: step 1/4.</text>
</comment>
<comment type="similarity">
    <text evidence="1">Belongs to the GTP cyclohydrolase II family.</text>
</comment>
<accession>B0VQB7</accession>
<dbReference type="EC" id="3.5.4.25" evidence="1"/>
<dbReference type="EMBL" id="CU468230">
    <property type="protein sequence ID" value="CAO99781.1"/>
    <property type="molecule type" value="Genomic_DNA"/>
</dbReference>
<dbReference type="SMR" id="B0VQB7"/>
<dbReference type="KEGG" id="abm:ABSDF0388"/>
<dbReference type="HOGENOM" id="CLU_020273_2_1_6"/>
<dbReference type="UniPathway" id="UPA00275">
    <property type="reaction ID" value="UER00400"/>
</dbReference>
<dbReference type="Proteomes" id="UP000001741">
    <property type="component" value="Chromosome"/>
</dbReference>
<dbReference type="GO" id="GO:0005829">
    <property type="term" value="C:cytosol"/>
    <property type="evidence" value="ECO:0007669"/>
    <property type="project" value="TreeGrafter"/>
</dbReference>
<dbReference type="GO" id="GO:0005525">
    <property type="term" value="F:GTP binding"/>
    <property type="evidence" value="ECO:0007669"/>
    <property type="project" value="UniProtKB-KW"/>
</dbReference>
<dbReference type="GO" id="GO:0003935">
    <property type="term" value="F:GTP cyclohydrolase II activity"/>
    <property type="evidence" value="ECO:0007669"/>
    <property type="project" value="UniProtKB-UniRule"/>
</dbReference>
<dbReference type="GO" id="GO:0008270">
    <property type="term" value="F:zinc ion binding"/>
    <property type="evidence" value="ECO:0007669"/>
    <property type="project" value="UniProtKB-UniRule"/>
</dbReference>
<dbReference type="GO" id="GO:0009231">
    <property type="term" value="P:riboflavin biosynthetic process"/>
    <property type="evidence" value="ECO:0007669"/>
    <property type="project" value="UniProtKB-UniRule"/>
</dbReference>
<dbReference type="CDD" id="cd00641">
    <property type="entry name" value="GTP_cyclohydro2"/>
    <property type="match status" value="1"/>
</dbReference>
<dbReference type="FunFam" id="3.40.50.10990:FF:000002">
    <property type="entry name" value="GTP cyclohydrolase-2"/>
    <property type="match status" value="1"/>
</dbReference>
<dbReference type="Gene3D" id="3.40.50.10990">
    <property type="entry name" value="GTP cyclohydrolase II"/>
    <property type="match status" value="1"/>
</dbReference>
<dbReference type="HAMAP" id="MF_00179">
    <property type="entry name" value="RibA"/>
    <property type="match status" value="1"/>
</dbReference>
<dbReference type="InterPro" id="IPR032677">
    <property type="entry name" value="GTP_cyclohydro_II"/>
</dbReference>
<dbReference type="InterPro" id="IPR000926">
    <property type="entry name" value="RibA"/>
</dbReference>
<dbReference type="InterPro" id="IPR036144">
    <property type="entry name" value="RibA-like_sf"/>
</dbReference>
<dbReference type="NCBIfam" id="NF001591">
    <property type="entry name" value="PRK00393.1"/>
    <property type="match status" value="1"/>
</dbReference>
<dbReference type="NCBIfam" id="TIGR00505">
    <property type="entry name" value="ribA"/>
    <property type="match status" value="1"/>
</dbReference>
<dbReference type="PANTHER" id="PTHR21327:SF18">
    <property type="entry name" value="3,4-DIHYDROXY-2-BUTANONE 4-PHOSPHATE SYNTHASE"/>
    <property type="match status" value="1"/>
</dbReference>
<dbReference type="PANTHER" id="PTHR21327">
    <property type="entry name" value="GTP CYCLOHYDROLASE II-RELATED"/>
    <property type="match status" value="1"/>
</dbReference>
<dbReference type="Pfam" id="PF00925">
    <property type="entry name" value="GTP_cyclohydro2"/>
    <property type="match status" value="1"/>
</dbReference>
<dbReference type="SUPFAM" id="SSF142695">
    <property type="entry name" value="RibA-like"/>
    <property type="match status" value="1"/>
</dbReference>
<name>RIBA_ACIBS</name>
<evidence type="ECO:0000255" key="1">
    <source>
        <dbReference type="HAMAP-Rule" id="MF_00179"/>
    </source>
</evidence>
<feature type="chain" id="PRO_1000098260" description="GTP cyclohydrolase-2">
    <location>
        <begin position="1"/>
        <end position="200"/>
    </location>
</feature>
<feature type="active site" description="Proton acceptor" evidence="1">
    <location>
        <position position="127"/>
    </location>
</feature>
<feature type="active site" description="Nucleophile" evidence="1">
    <location>
        <position position="129"/>
    </location>
</feature>
<feature type="binding site" evidence="1">
    <location>
        <begin position="50"/>
        <end position="54"/>
    </location>
    <ligand>
        <name>GTP</name>
        <dbReference type="ChEBI" id="CHEBI:37565"/>
    </ligand>
</feature>
<feature type="binding site" evidence="1">
    <location>
        <position position="55"/>
    </location>
    <ligand>
        <name>Zn(2+)</name>
        <dbReference type="ChEBI" id="CHEBI:29105"/>
        <note>catalytic</note>
    </ligand>
</feature>
<feature type="binding site" evidence="1">
    <location>
        <position position="66"/>
    </location>
    <ligand>
        <name>Zn(2+)</name>
        <dbReference type="ChEBI" id="CHEBI:29105"/>
        <note>catalytic</note>
    </ligand>
</feature>
<feature type="binding site" evidence="1">
    <location>
        <position position="68"/>
    </location>
    <ligand>
        <name>Zn(2+)</name>
        <dbReference type="ChEBI" id="CHEBI:29105"/>
        <note>catalytic</note>
    </ligand>
</feature>
<feature type="binding site" evidence="1">
    <location>
        <position position="71"/>
    </location>
    <ligand>
        <name>GTP</name>
        <dbReference type="ChEBI" id="CHEBI:37565"/>
    </ligand>
</feature>
<feature type="binding site" evidence="1">
    <location>
        <begin position="93"/>
        <end position="95"/>
    </location>
    <ligand>
        <name>GTP</name>
        <dbReference type="ChEBI" id="CHEBI:37565"/>
    </ligand>
</feature>
<feature type="binding site" evidence="1">
    <location>
        <position position="115"/>
    </location>
    <ligand>
        <name>GTP</name>
        <dbReference type="ChEBI" id="CHEBI:37565"/>
    </ligand>
</feature>
<feature type="binding site" evidence="1">
    <location>
        <position position="150"/>
    </location>
    <ligand>
        <name>GTP</name>
        <dbReference type="ChEBI" id="CHEBI:37565"/>
    </ligand>
</feature>
<feature type="binding site" evidence="1">
    <location>
        <position position="155"/>
    </location>
    <ligand>
        <name>GTP</name>
        <dbReference type="ChEBI" id="CHEBI:37565"/>
    </ligand>
</feature>
<organism>
    <name type="scientific">Acinetobacter baumannii (strain SDF)</name>
    <dbReference type="NCBI Taxonomy" id="509170"/>
    <lineage>
        <taxon>Bacteria</taxon>
        <taxon>Pseudomonadati</taxon>
        <taxon>Pseudomonadota</taxon>
        <taxon>Gammaproteobacteria</taxon>
        <taxon>Moraxellales</taxon>
        <taxon>Moraxellaceae</taxon>
        <taxon>Acinetobacter</taxon>
        <taxon>Acinetobacter calcoaceticus/baumannii complex</taxon>
    </lineage>
</organism>
<gene>
    <name evidence="1" type="primary">ribA</name>
    <name type="ordered locus">ABSDF0388</name>
</gene>